<organism>
    <name type="scientific">Yersinia pseudotuberculosis serotype IB (strain PB1/+)</name>
    <dbReference type="NCBI Taxonomy" id="502801"/>
    <lineage>
        <taxon>Bacteria</taxon>
        <taxon>Pseudomonadati</taxon>
        <taxon>Pseudomonadota</taxon>
        <taxon>Gammaproteobacteria</taxon>
        <taxon>Enterobacterales</taxon>
        <taxon>Yersiniaceae</taxon>
        <taxon>Yersinia</taxon>
    </lineage>
</organism>
<reference key="1">
    <citation type="submission" date="2008-04" db="EMBL/GenBank/DDBJ databases">
        <title>Complete sequence of Yersinia pseudotuberculosis PB1/+.</title>
        <authorList>
            <person name="Copeland A."/>
            <person name="Lucas S."/>
            <person name="Lapidus A."/>
            <person name="Glavina del Rio T."/>
            <person name="Dalin E."/>
            <person name="Tice H."/>
            <person name="Bruce D."/>
            <person name="Goodwin L."/>
            <person name="Pitluck S."/>
            <person name="Munk A.C."/>
            <person name="Brettin T."/>
            <person name="Detter J.C."/>
            <person name="Han C."/>
            <person name="Tapia R."/>
            <person name="Schmutz J."/>
            <person name="Larimer F."/>
            <person name="Land M."/>
            <person name="Hauser L."/>
            <person name="Challacombe J.F."/>
            <person name="Green L."/>
            <person name="Lindler L.E."/>
            <person name="Nikolich M.P."/>
            <person name="Richardson P."/>
        </authorList>
    </citation>
    <scope>NUCLEOTIDE SEQUENCE [LARGE SCALE GENOMIC DNA]</scope>
    <source>
        <strain>PB1/+</strain>
    </source>
</reference>
<proteinExistence type="inferred from homology"/>
<comment type="similarity">
    <text evidence="1">Belongs to the bacterial ribosomal protein bL34 family.</text>
</comment>
<feature type="chain" id="PRO_1000196149" description="Large ribosomal subunit protein bL34">
    <location>
        <begin position="1"/>
        <end position="46"/>
    </location>
</feature>
<feature type="region of interest" description="Disordered" evidence="2">
    <location>
        <begin position="26"/>
        <end position="46"/>
    </location>
</feature>
<feature type="compositionally biased region" description="Basic residues" evidence="2">
    <location>
        <begin position="31"/>
        <end position="40"/>
    </location>
</feature>
<sequence length="46" mass="5426">MKRTFQPSVLKRNRSHGFRARMATKNGRQVLARRRAKSRSRLTVSK</sequence>
<gene>
    <name evidence="1" type="primary">rpmH</name>
    <name type="ordered locus">YPTS_4205</name>
</gene>
<name>RL34_YERPB</name>
<protein>
    <recommendedName>
        <fullName evidence="1">Large ribosomal subunit protein bL34</fullName>
    </recommendedName>
    <alternativeName>
        <fullName evidence="3">50S ribosomal protein L34</fullName>
    </alternativeName>
</protein>
<evidence type="ECO:0000255" key="1">
    <source>
        <dbReference type="HAMAP-Rule" id="MF_00391"/>
    </source>
</evidence>
<evidence type="ECO:0000256" key="2">
    <source>
        <dbReference type="SAM" id="MobiDB-lite"/>
    </source>
</evidence>
<evidence type="ECO:0000305" key="3"/>
<dbReference type="EMBL" id="CP001048">
    <property type="protein sequence ID" value="ACC91148.1"/>
    <property type="molecule type" value="Genomic_DNA"/>
</dbReference>
<dbReference type="RefSeq" id="WP_002220736.1">
    <property type="nucleotide sequence ID" value="NZ_CP009780.1"/>
</dbReference>
<dbReference type="SMR" id="B2K872"/>
<dbReference type="GeneID" id="97458397"/>
<dbReference type="KEGG" id="ypb:YPTS_4205"/>
<dbReference type="PATRIC" id="fig|502801.10.peg.3675"/>
<dbReference type="GO" id="GO:1990904">
    <property type="term" value="C:ribonucleoprotein complex"/>
    <property type="evidence" value="ECO:0007669"/>
    <property type="project" value="UniProtKB-KW"/>
</dbReference>
<dbReference type="GO" id="GO:0005840">
    <property type="term" value="C:ribosome"/>
    <property type="evidence" value="ECO:0007669"/>
    <property type="project" value="UniProtKB-KW"/>
</dbReference>
<dbReference type="GO" id="GO:0003735">
    <property type="term" value="F:structural constituent of ribosome"/>
    <property type="evidence" value="ECO:0007669"/>
    <property type="project" value="InterPro"/>
</dbReference>
<dbReference type="GO" id="GO:0006412">
    <property type="term" value="P:translation"/>
    <property type="evidence" value="ECO:0007669"/>
    <property type="project" value="UniProtKB-UniRule"/>
</dbReference>
<dbReference type="FunFam" id="1.10.287.3980:FF:000001">
    <property type="entry name" value="Mitochondrial ribosomal protein L34"/>
    <property type="match status" value="1"/>
</dbReference>
<dbReference type="Gene3D" id="1.10.287.3980">
    <property type="match status" value="1"/>
</dbReference>
<dbReference type="HAMAP" id="MF_00391">
    <property type="entry name" value="Ribosomal_bL34"/>
    <property type="match status" value="1"/>
</dbReference>
<dbReference type="InterPro" id="IPR000271">
    <property type="entry name" value="Ribosomal_bL34"/>
</dbReference>
<dbReference type="InterPro" id="IPR020939">
    <property type="entry name" value="Ribosomal_bL34_CS"/>
</dbReference>
<dbReference type="NCBIfam" id="TIGR01030">
    <property type="entry name" value="rpmH_bact"/>
    <property type="match status" value="1"/>
</dbReference>
<dbReference type="PANTHER" id="PTHR14503:SF4">
    <property type="entry name" value="LARGE RIBOSOMAL SUBUNIT PROTEIN BL34M"/>
    <property type="match status" value="1"/>
</dbReference>
<dbReference type="PANTHER" id="PTHR14503">
    <property type="entry name" value="MITOCHONDRIAL RIBOSOMAL PROTEIN 34 FAMILY MEMBER"/>
    <property type="match status" value="1"/>
</dbReference>
<dbReference type="Pfam" id="PF00468">
    <property type="entry name" value="Ribosomal_L34"/>
    <property type="match status" value="1"/>
</dbReference>
<dbReference type="PROSITE" id="PS00784">
    <property type="entry name" value="RIBOSOMAL_L34"/>
    <property type="match status" value="1"/>
</dbReference>
<keyword id="KW-0687">Ribonucleoprotein</keyword>
<keyword id="KW-0689">Ribosomal protein</keyword>
<accession>B2K872</accession>